<proteinExistence type="inferred from homology"/>
<dbReference type="EMBL" id="AE017226">
    <property type="protein sequence ID" value="AAS11343.1"/>
    <property type="molecule type" value="Genomic_DNA"/>
</dbReference>
<dbReference type="RefSeq" id="NP_971462.1">
    <property type="nucleotide sequence ID" value="NC_002967.9"/>
</dbReference>
<dbReference type="RefSeq" id="WP_002682116.1">
    <property type="nucleotide sequence ID" value="NC_002967.9"/>
</dbReference>
<dbReference type="SMR" id="Q73PE7"/>
<dbReference type="STRING" id="243275.TDE_0852"/>
<dbReference type="PaxDb" id="243275-TDE_0852"/>
<dbReference type="GeneID" id="2741363"/>
<dbReference type="KEGG" id="tde:TDE_0852"/>
<dbReference type="PATRIC" id="fig|243275.7.peg.821"/>
<dbReference type="eggNOG" id="COG0102">
    <property type="taxonomic scope" value="Bacteria"/>
</dbReference>
<dbReference type="HOGENOM" id="CLU_082184_2_2_12"/>
<dbReference type="OrthoDB" id="9801330at2"/>
<dbReference type="Proteomes" id="UP000008212">
    <property type="component" value="Chromosome"/>
</dbReference>
<dbReference type="GO" id="GO:0022625">
    <property type="term" value="C:cytosolic large ribosomal subunit"/>
    <property type="evidence" value="ECO:0007669"/>
    <property type="project" value="TreeGrafter"/>
</dbReference>
<dbReference type="GO" id="GO:0003729">
    <property type="term" value="F:mRNA binding"/>
    <property type="evidence" value="ECO:0007669"/>
    <property type="project" value="TreeGrafter"/>
</dbReference>
<dbReference type="GO" id="GO:0003735">
    <property type="term" value="F:structural constituent of ribosome"/>
    <property type="evidence" value="ECO:0007669"/>
    <property type="project" value="InterPro"/>
</dbReference>
<dbReference type="GO" id="GO:0017148">
    <property type="term" value="P:negative regulation of translation"/>
    <property type="evidence" value="ECO:0007669"/>
    <property type="project" value="TreeGrafter"/>
</dbReference>
<dbReference type="GO" id="GO:0006412">
    <property type="term" value="P:translation"/>
    <property type="evidence" value="ECO:0007669"/>
    <property type="project" value="UniProtKB-UniRule"/>
</dbReference>
<dbReference type="CDD" id="cd00392">
    <property type="entry name" value="Ribosomal_L13"/>
    <property type="match status" value="1"/>
</dbReference>
<dbReference type="FunFam" id="3.90.1180.10:FF:000001">
    <property type="entry name" value="50S ribosomal protein L13"/>
    <property type="match status" value="1"/>
</dbReference>
<dbReference type="Gene3D" id="3.90.1180.10">
    <property type="entry name" value="Ribosomal protein L13"/>
    <property type="match status" value="1"/>
</dbReference>
<dbReference type="HAMAP" id="MF_01366">
    <property type="entry name" value="Ribosomal_uL13"/>
    <property type="match status" value="1"/>
</dbReference>
<dbReference type="InterPro" id="IPR005822">
    <property type="entry name" value="Ribosomal_uL13"/>
</dbReference>
<dbReference type="InterPro" id="IPR005823">
    <property type="entry name" value="Ribosomal_uL13_bac-type"/>
</dbReference>
<dbReference type="InterPro" id="IPR023563">
    <property type="entry name" value="Ribosomal_uL13_CS"/>
</dbReference>
<dbReference type="InterPro" id="IPR036899">
    <property type="entry name" value="Ribosomal_uL13_sf"/>
</dbReference>
<dbReference type="NCBIfam" id="TIGR01066">
    <property type="entry name" value="rplM_bact"/>
    <property type="match status" value="1"/>
</dbReference>
<dbReference type="PANTHER" id="PTHR11545:SF2">
    <property type="entry name" value="LARGE RIBOSOMAL SUBUNIT PROTEIN UL13M"/>
    <property type="match status" value="1"/>
</dbReference>
<dbReference type="PANTHER" id="PTHR11545">
    <property type="entry name" value="RIBOSOMAL PROTEIN L13"/>
    <property type="match status" value="1"/>
</dbReference>
<dbReference type="Pfam" id="PF00572">
    <property type="entry name" value="Ribosomal_L13"/>
    <property type="match status" value="1"/>
</dbReference>
<dbReference type="PIRSF" id="PIRSF002181">
    <property type="entry name" value="Ribosomal_L13"/>
    <property type="match status" value="1"/>
</dbReference>
<dbReference type="SUPFAM" id="SSF52161">
    <property type="entry name" value="Ribosomal protein L13"/>
    <property type="match status" value="1"/>
</dbReference>
<dbReference type="PROSITE" id="PS00783">
    <property type="entry name" value="RIBOSOMAL_L13"/>
    <property type="match status" value="1"/>
</dbReference>
<name>RL13_TREDE</name>
<sequence length="142" mass="15501">MKTIFFKEHEAPRSWYLIDAAGKPLGRVAAKTAAMLRGKHKVSFAPHQEIGDYVVIINAEKVAVTGNKAKDKMYYTHSGYVGGLKSINFNGLIAKKPAEPLMIAIKGMLPKGPLGRKLLTNVKVYAGPEHPHQAQNPIAVEV</sequence>
<reference key="1">
    <citation type="journal article" date="2004" name="Proc. Natl. Acad. Sci. U.S.A.">
        <title>Comparison of the genome of the oral pathogen Treponema denticola with other spirochete genomes.</title>
        <authorList>
            <person name="Seshadri R."/>
            <person name="Myers G.S.A."/>
            <person name="Tettelin H."/>
            <person name="Eisen J.A."/>
            <person name="Heidelberg J.F."/>
            <person name="Dodson R.J."/>
            <person name="Davidsen T.M."/>
            <person name="DeBoy R.T."/>
            <person name="Fouts D.E."/>
            <person name="Haft D.H."/>
            <person name="Selengut J."/>
            <person name="Ren Q."/>
            <person name="Brinkac L.M."/>
            <person name="Madupu R."/>
            <person name="Kolonay J.F."/>
            <person name="Durkin S.A."/>
            <person name="Daugherty S.C."/>
            <person name="Shetty J."/>
            <person name="Shvartsbeyn A."/>
            <person name="Gebregeorgis E."/>
            <person name="Geer K."/>
            <person name="Tsegaye G."/>
            <person name="Malek J.A."/>
            <person name="Ayodeji B."/>
            <person name="Shatsman S."/>
            <person name="McLeod M.P."/>
            <person name="Smajs D."/>
            <person name="Howell J.K."/>
            <person name="Pal S."/>
            <person name="Amin A."/>
            <person name="Vashisth P."/>
            <person name="McNeill T.Z."/>
            <person name="Xiang Q."/>
            <person name="Sodergren E."/>
            <person name="Baca E."/>
            <person name="Weinstock G.M."/>
            <person name="Norris S.J."/>
            <person name="Fraser C.M."/>
            <person name="Paulsen I.T."/>
        </authorList>
    </citation>
    <scope>NUCLEOTIDE SEQUENCE [LARGE SCALE GENOMIC DNA]</scope>
    <source>
        <strain>ATCC 35405 / DSM 14222 / CIP 103919 / JCM 8153 / KCTC 15104</strain>
    </source>
</reference>
<accession>Q73PE7</accession>
<protein>
    <recommendedName>
        <fullName evidence="1">Large ribosomal subunit protein uL13</fullName>
    </recommendedName>
    <alternativeName>
        <fullName evidence="2">50S ribosomal protein L13</fullName>
    </alternativeName>
</protein>
<gene>
    <name evidence="1" type="primary">rplM</name>
    <name type="ordered locus">TDE_0852</name>
</gene>
<comment type="function">
    <text evidence="1">This protein is one of the early assembly proteins of the 50S ribosomal subunit, although it is not seen to bind rRNA by itself. It is important during the early stages of 50S assembly.</text>
</comment>
<comment type="subunit">
    <text evidence="1">Part of the 50S ribosomal subunit.</text>
</comment>
<comment type="similarity">
    <text evidence="1">Belongs to the universal ribosomal protein uL13 family.</text>
</comment>
<keyword id="KW-1185">Reference proteome</keyword>
<keyword id="KW-0687">Ribonucleoprotein</keyword>
<keyword id="KW-0689">Ribosomal protein</keyword>
<organism>
    <name type="scientific">Treponema denticola (strain ATCC 35405 / DSM 14222 / CIP 103919 / JCM 8153 / KCTC 15104)</name>
    <dbReference type="NCBI Taxonomy" id="243275"/>
    <lineage>
        <taxon>Bacteria</taxon>
        <taxon>Pseudomonadati</taxon>
        <taxon>Spirochaetota</taxon>
        <taxon>Spirochaetia</taxon>
        <taxon>Spirochaetales</taxon>
        <taxon>Treponemataceae</taxon>
        <taxon>Treponema</taxon>
    </lineage>
</organism>
<feature type="chain" id="PRO_1000055486" description="Large ribosomal subunit protein uL13">
    <location>
        <begin position="1"/>
        <end position="142"/>
    </location>
</feature>
<evidence type="ECO:0000255" key="1">
    <source>
        <dbReference type="HAMAP-Rule" id="MF_01366"/>
    </source>
</evidence>
<evidence type="ECO:0000305" key="2"/>